<accession>Q0I9T4</accession>
<gene>
    <name evidence="1" type="primary">psb28</name>
    <name type="ordered locus">sync_1583</name>
</gene>
<comment type="subunit">
    <text evidence="1">Part of the photosystem II complex.</text>
</comment>
<comment type="subcellular location">
    <subcellularLocation>
        <location evidence="1">Cellular thylakoid membrane</location>
        <topology evidence="1">Peripheral membrane protein</topology>
        <orientation evidence="1">Cytoplasmic side</orientation>
    </subcellularLocation>
</comment>
<comment type="similarity">
    <text evidence="1">Belongs to the Psb28 family.</text>
</comment>
<protein>
    <recommendedName>
        <fullName evidence="1">Photosystem II reaction center Psb28 protein</fullName>
    </recommendedName>
    <alternativeName>
        <fullName evidence="1">Photosystem II 13 kDa protein</fullName>
    </alternativeName>
    <alternativeName>
        <fullName evidence="1">Photosystem II reaction center W protein</fullName>
    </alternativeName>
</protein>
<evidence type="ECO:0000255" key="1">
    <source>
        <dbReference type="HAMAP-Rule" id="MF_01370"/>
    </source>
</evidence>
<evidence type="ECO:0000256" key="2">
    <source>
        <dbReference type="SAM" id="MobiDB-lite"/>
    </source>
</evidence>
<name>PSB28_SYNS3</name>
<organism>
    <name type="scientific">Synechococcus sp. (strain CC9311)</name>
    <dbReference type="NCBI Taxonomy" id="64471"/>
    <lineage>
        <taxon>Bacteria</taxon>
        <taxon>Bacillati</taxon>
        <taxon>Cyanobacteriota</taxon>
        <taxon>Cyanophyceae</taxon>
        <taxon>Synechococcales</taxon>
        <taxon>Synechococcaceae</taxon>
        <taxon>Synechococcus</taxon>
    </lineage>
</organism>
<proteinExistence type="inferred from homology"/>
<keyword id="KW-0472">Membrane</keyword>
<keyword id="KW-0602">Photosynthesis</keyword>
<keyword id="KW-0604">Photosystem II</keyword>
<keyword id="KW-1185">Reference proteome</keyword>
<keyword id="KW-0793">Thylakoid</keyword>
<dbReference type="EMBL" id="CP000435">
    <property type="protein sequence ID" value="ABI46712.1"/>
    <property type="molecule type" value="Genomic_DNA"/>
</dbReference>
<dbReference type="RefSeq" id="WP_011619505.1">
    <property type="nucleotide sequence ID" value="NC_008319.1"/>
</dbReference>
<dbReference type="SMR" id="Q0I9T4"/>
<dbReference type="STRING" id="64471.sync_1583"/>
<dbReference type="KEGG" id="syg:sync_1583"/>
<dbReference type="eggNOG" id="ENOG5031GDS">
    <property type="taxonomic scope" value="Bacteria"/>
</dbReference>
<dbReference type="HOGENOM" id="CLU_137323_1_0_3"/>
<dbReference type="OrthoDB" id="559598at2"/>
<dbReference type="Proteomes" id="UP000001961">
    <property type="component" value="Chromosome"/>
</dbReference>
<dbReference type="GO" id="GO:0009654">
    <property type="term" value="C:photosystem II oxygen evolving complex"/>
    <property type="evidence" value="ECO:0007669"/>
    <property type="project" value="InterPro"/>
</dbReference>
<dbReference type="GO" id="GO:0031676">
    <property type="term" value="C:plasma membrane-derived thylakoid membrane"/>
    <property type="evidence" value="ECO:0007669"/>
    <property type="project" value="UniProtKB-SubCell"/>
</dbReference>
<dbReference type="GO" id="GO:0015979">
    <property type="term" value="P:photosynthesis"/>
    <property type="evidence" value="ECO:0007669"/>
    <property type="project" value="UniProtKB-UniRule"/>
</dbReference>
<dbReference type="Gene3D" id="2.40.30.220">
    <property type="entry name" value="Photosystem II Psb28"/>
    <property type="match status" value="1"/>
</dbReference>
<dbReference type="HAMAP" id="MF_01370">
    <property type="entry name" value="PSII_Psb28"/>
    <property type="match status" value="1"/>
</dbReference>
<dbReference type="InterPro" id="IPR038676">
    <property type="entry name" value="Psb28_c1_sf"/>
</dbReference>
<dbReference type="InterPro" id="IPR005610">
    <property type="entry name" value="PSII_Psb28_class-1"/>
</dbReference>
<dbReference type="NCBIfam" id="TIGR03047">
    <property type="entry name" value="PS_II_psb28"/>
    <property type="match status" value="1"/>
</dbReference>
<dbReference type="PANTHER" id="PTHR34963">
    <property type="match status" value="1"/>
</dbReference>
<dbReference type="PANTHER" id="PTHR34963:SF2">
    <property type="entry name" value="PHOTOSYSTEM II REACTION CENTER PSB28 PROTEIN, CHLOROPLASTIC"/>
    <property type="match status" value="1"/>
</dbReference>
<dbReference type="Pfam" id="PF03912">
    <property type="entry name" value="Psb28"/>
    <property type="match status" value="1"/>
</dbReference>
<sequence>MADGSKAVIQFLRGVDEPVVPDIRVTRSRDGRTGQAIFVFEQPEALAPEVMEAITGMFMLDEEGMLVTREVNGKFVNGKASALEATYTWKSEQDFERFMRFAQRYADSSGLGYSQDSGEAPASDSSNG</sequence>
<feature type="chain" id="PRO_0000271573" description="Photosystem II reaction center Psb28 protein">
    <location>
        <begin position="1"/>
        <end position="128"/>
    </location>
</feature>
<feature type="region of interest" description="Disordered" evidence="2">
    <location>
        <begin position="109"/>
        <end position="128"/>
    </location>
</feature>
<feature type="compositionally biased region" description="Polar residues" evidence="2">
    <location>
        <begin position="111"/>
        <end position="128"/>
    </location>
</feature>
<reference key="1">
    <citation type="journal article" date="2006" name="Proc. Natl. Acad. Sci. U.S.A.">
        <title>Genome sequence of Synechococcus CC9311: insights into adaptation to a coastal environment.</title>
        <authorList>
            <person name="Palenik B."/>
            <person name="Ren Q."/>
            <person name="Dupont C.L."/>
            <person name="Myers G.S."/>
            <person name="Heidelberg J.F."/>
            <person name="Badger J.H."/>
            <person name="Madupu R."/>
            <person name="Nelson W.C."/>
            <person name="Brinkac L.M."/>
            <person name="Dodson R.J."/>
            <person name="Durkin A.S."/>
            <person name="Daugherty S.C."/>
            <person name="Sullivan S.A."/>
            <person name="Khouri H."/>
            <person name="Mohamoud Y."/>
            <person name="Halpin R."/>
            <person name="Paulsen I.T."/>
        </authorList>
    </citation>
    <scope>NUCLEOTIDE SEQUENCE [LARGE SCALE GENOMIC DNA]</scope>
    <source>
        <strain>CC9311</strain>
    </source>
</reference>